<protein>
    <recommendedName>
        <fullName>Chaperone protein YscB</fullName>
    </recommendedName>
    <alternativeName>
        <fullName>Yop proteins translocation protein B</fullName>
    </alternativeName>
</protein>
<dbReference type="EMBL" id="M83225">
    <property type="protein sequence ID" value="AAA27637.1"/>
    <property type="molecule type" value="Genomic_DNA"/>
</dbReference>
<dbReference type="EMBL" id="AF074612">
    <property type="protein sequence ID" value="AAC69829.1"/>
    <property type="molecule type" value="Genomic_DNA"/>
</dbReference>
<dbReference type="EMBL" id="AF053946">
    <property type="protein sequence ID" value="AAC62553.1"/>
    <property type="molecule type" value="Genomic_DNA"/>
</dbReference>
<dbReference type="EMBL" id="AL117189">
    <property type="protein sequence ID" value="CAB54928.1"/>
    <property type="molecule type" value="Genomic_DNA"/>
</dbReference>
<dbReference type="EMBL" id="AE017043">
    <property type="protein sequence ID" value="AAS58551.1"/>
    <property type="molecule type" value="Genomic_DNA"/>
</dbReference>
<dbReference type="PIR" id="T43574">
    <property type="entry name" value="T43574"/>
</dbReference>
<dbReference type="RefSeq" id="NP_395185.1">
    <property type="nucleotide sequence ID" value="NC_003131.1"/>
</dbReference>
<dbReference type="RefSeq" id="NP_857731.1">
    <property type="nucleotide sequence ID" value="NC_004836.1"/>
</dbReference>
<dbReference type="RefSeq" id="NP_857926.1">
    <property type="nucleotide sequence ID" value="NC_004839.1"/>
</dbReference>
<dbReference type="RefSeq" id="WP_002212925.1">
    <property type="nucleotide sequence ID" value="NZ_WUCM01000070.1"/>
</dbReference>
<dbReference type="PDB" id="1XKP">
    <property type="method" value="X-ray"/>
    <property type="resolution" value="1.70 A"/>
    <property type="chains" value="C=1-137"/>
</dbReference>
<dbReference type="PDBsum" id="1XKP"/>
<dbReference type="SMR" id="Q56973"/>
<dbReference type="IntAct" id="Q56973">
    <property type="interactions" value="4"/>
</dbReference>
<dbReference type="MINT" id="Q56973"/>
<dbReference type="PaxDb" id="214092-5832471"/>
<dbReference type="DNASU" id="1149290"/>
<dbReference type="EnsemblBacteria" id="AAS58551">
    <property type="protein sequence ID" value="AAS58551"/>
    <property type="gene ID" value="YP_pCD32"/>
</dbReference>
<dbReference type="KEGG" id="ype:YPCD1.51"/>
<dbReference type="KEGG" id="ypm:YP_pCD32"/>
<dbReference type="PATRIC" id="fig|214092.21.peg.60"/>
<dbReference type="eggNOG" id="ENOG5032ZXD">
    <property type="taxonomic scope" value="Bacteria"/>
</dbReference>
<dbReference type="HOGENOM" id="CLU_154680_0_0_6"/>
<dbReference type="OMA" id="SYHLRID"/>
<dbReference type="OrthoDB" id="6944076at2"/>
<dbReference type="EvolutionaryTrace" id="Q56973"/>
<dbReference type="Proteomes" id="UP000000815">
    <property type="component" value="Plasmid pCD1"/>
</dbReference>
<dbReference type="Proteomes" id="UP000001019">
    <property type="component" value="Plasmid pCD1"/>
</dbReference>
<dbReference type="GO" id="GO:0005737">
    <property type="term" value="C:cytoplasm"/>
    <property type="evidence" value="ECO:0007669"/>
    <property type="project" value="UniProtKB-SubCell"/>
</dbReference>
<dbReference type="GO" id="GO:0005886">
    <property type="term" value="C:plasma membrane"/>
    <property type="evidence" value="ECO:0007669"/>
    <property type="project" value="UniProtKB-SubCell"/>
</dbReference>
<dbReference type="GO" id="GO:0030254">
    <property type="term" value="P:protein secretion by the type III secretion system"/>
    <property type="evidence" value="ECO:0007669"/>
    <property type="project" value="InterPro"/>
</dbReference>
<dbReference type="CDD" id="cd17027">
    <property type="entry name" value="T3SC_IA_YscB_AscB-like"/>
    <property type="match status" value="1"/>
</dbReference>
<dbReference type="Gene3D" id="3.30.1460.10">
    <property type="match status" value="1"/>
</dbReference>
<dbReference type="InterPro" id="IPR013353">
    <property type="entry name" value="T3SS_YscB"/>
</dbReference>
<dbReference type="InterPro" id="IPR010261">
    <property type="entry name" value="Tir_chaperone"/>
</dbReference>
<dbReference type="NCBIfam" id="TIGR02513">
    <property type="entry name" value="type_III_yscB"/>
    <property type="match status" value="1"/>
</dbReference>
<dbReference type="Pfam" id="PF05932">
    <property type="entry name" value="CesT"/>
    <property type="match status" value="1"/>
</dbReference>
<dbReference type="SUPFAM" id="SSF69635">
    <property type="entry name" value="Type III secretory system chaperone-like"/>
    <property type="match status" value="1"/>
</dbReference>
<organism>
    <name type="scientific">Yersinia pestis</name>
    <dbReference type="NCBI Taxonomy" id="632"/>
    <lineage>
        <taxon>Bacteria</taxon>
        <taxon>Pseudomonadati</taxon>
        <taxon>Pseudomonadota</taxon>
        <taxon>Gammaproteobacteria</taxon>
        <taxon>Enterobacterales</taxon>
        <taxon>Yersiniaceae</taxon>
        <taxon>Yersinia</taxon>
    </lineage>
</organism>
<reference key="1">
    <citation type="journal article" date="1992" name="J. Bacteriol.">
        <title>Structure and regulation of the Yersinia pestis yscBCDEF operon.</title>
        <authorList>
            <person name="Haddix P.L."/>
            <person name="Straley S.C."/>
        </authorList>
    </citation>
    <scope>NUCLEOTIDE SEQUENCE [GENOMIC DNA]</scope>
    <scope>INDUCTION</scope>
    <source>
        <strain>KIM5 / Biovar Mediaevalis</strain>
    </source>
</reference>
<reference key="2">
    <citation type="journal article" date="1998" name="Infect. Immun.">
        <title>DNA sequencing and analysis of the low-Ca2+-response plasmid pCD1 of Yersinia pestis KIM5.</title>
        <authorList>
            <person name="Perry R.D."/>
            <person name="Straley S.C."/>
            <person name="Fetherston J.D."/>
            <person name="Rose D.J."/>
            <person name="Gregor J."/>
            <person name="Blattner F.R."/>
        </authorList>
    </citation>
    <scope>NUCLEOTIDE SEQUENCE [GENOMIC DNA]</scope>
    <source>
        <strain>KIM5 / Biovar Mediaevalis</strain>
    </source>
</reference>
<reference key="3">
    <citation type="journal article" date="1998" name="J. Bacteriol.">
        <title>Structural organization of virulence-associated plasmids of Yersinia pestis.</title>
        <authorList>
            <person name="Hu P."/>
            <person name="Elliott J."/>
            <person name="McCready P."/>
            <person name="Skowronski E."/>
            <person name="Garnes J."/>
            <person name="Kobayashi A."/>
            <person name="Brubaker R.R."/>
            <person name="Garcia E."/>
        </authorList>
    </citation>
    <scope>NUCLEOTIDE SEQUENCE [GENOMIC DNA]</scope>
    <source>
        <strain>KIM5 / Biovar Mediaevalis</strain>
    </source>
</reference>
<reference key="4">
    <citation type="journal article" date="2001" name="Nature">
        <title>Genome sequence of Yersinia pestis, the causative agent of plague.</title>
        <authorList>
            <person name="Parkhill J."/>
            <person name="Wren B.W."/>
            <person name="Thomson N.R."/>
            <person name="Titball R.W."/>
            <person name="Holden M.T.G."/>
            <person name="Prentice M.B."/>
            <person name="Sebaihia M."/>
            <person name="James K.D."/>
            <person name="Churcher C.M."/>
            <person name="Mungall K.L."/>
            <person name="Baker S."/>
            <person name="Basham D."/>
            <person name="Bentley S.D."/>
            <person name="Brooks K."/>
            <person name="Cerdeno-Tarraga A.-M."/>
            <person name="Chillingworth T."/>
            <person name="Cronin A."/>
            <person name="Davies R.M."/>
            <person name="Davis P."/>
            <person name="Dougan G."/>
            <person name="Feltwell T."/>
            <person name="Hamlin N."/>
            <person name="Holroyd S."/>
            <person name="Jagels K."/>
            <person name="Karlyshev A.V."/>
            <person name="Leather S."/>
            <person name="Moule S."/>
            <person name="Oyston P.C.F."/>
            <person name="Quail M.A."/>
            <person name="Rutherford K.M."/>
            <person name="Simmonds M."/>
            <person name="Skelton J."/>
            <person name="Stevens K."/>
            <person name="Whitehead S."/>
            <person name="Barrell B.G."/>
        </authorList>
    </citation>
    <scope>NUCLEOTIDE SEQUENCE [LARGE SCALE GENOMIC DNA]</scope>
    <source>
        <strain>CO-92 / Biovar Orientalis</strain>
    </source>
</reference>
<reference key="5">
    <citation type="journal article" date="2004" name="DNA Res.">
        <title>Complete genome sequence of Yersinia pestis strain 91001, an isolate avirulent to humans.</title>
        <authorList>
            <person name="Song Y."/>
            <person name="Tong Z."/>
            <person name="Wang J."/>
            <person name="Wang L."/>
            <person name="Guo Z."/>
            <person name="Han Y."/>
            <person name="Zhang J."/>
            <person name="Pei D."/>
            <person name="Zhou D."/>
            <person name="Qin H."/>
            <person name="Pang X."/>
            <person name="Han Y."/>
            <person name="Zhai J."/>
            <person name="Li M."/>
            <person name="Cui B."/>
            <person name="Qi Z."/>
            <person name="Jin L."/>
            <person name="Dai R."/>
            <person name="Chen F."/>
            <person name="Li S."/>
            <person name="Ye C."/>
            <person name="Du Z."/>
            <person name="Lin W."/>
            <person name="Wang J."/>
            <person name="Yu J."/>
            <person name="Yang H."/>
            <person name="Wang J."/>
            <person name="Huang P."/>
            <person name="Yang R."/>
        </authorList>
    </citation>
    <scope>NUCLEOTIDE SEQUENCE [LARGE SCALE GENOMIC DNA]</scope>
    <source>
        <strain>91001 / Biovar Mediaevalis</strain>
    </source>
</reference>
<reference key="6">
    <citation type="journal article" date="1998" name="J. Bacteriol.">
        <title>YscB of Yersinia pestis functions as a specific chaperone for YopN.</title>
        <authorList>
            <person name="Jackson M.W."/>
            <person name="Day J.B."/>
            <person name="Plano G.V."/>
        </authorList>
    </citation>
    <scope>FUNCTION</scope>
    <scope>SUBCELLULAR LOCATION</scope>
    <source>
        <strain>KIM5 / Biovar Mediaevalis</strain>
        <strain>KIM8</strain>
    </source>
</reference>
<reference key="7">
    <citation type="journal article" date="1998" name="Mol. Microbiol.">
        <title>A complex composed of SycN and YscB functions as a specific chaperone for YopN in Yersinia pestis.</title>
        <authorList>
            <person name="Day J.B."/>
            <person name="Plano G.V."/>
        </authorList>
    </citation>
    <scope>FUNCTION</scope>
    <scope>SUBUNIT</scope>
    <source>
        <strain>KIM5 / Biovar Mediaevalis</strain>
        <strain>KIM8</strain>
    </source>
</reference>
<reference key="8">
    <citation type="journal article" date="2003" name="Mol. Microbiol.">
        <title>Translocation of YopE and YopN into eukaryotic cells by Yersinia pestis yopN, tyeA, sycN, yscB and lcrG deletion mutants measured using a phosphorylatable peptide tag and phosphospecific antibodies.</title>
        <authorList>
            <person name="Day J.B."/>
            <person name="Ferracci F."/>
            <person name="Plano G.V."/>
        </authorList>
    </citation>
    <scope>FUNCTION</scope>
    <source>
        <strain>KIM5 / Biovar Mediaevalis</strain>
        <strain>KIM8</strain>
    </source>
</reference>
<keyword id="KW-0002">3D-structure</keyword>
<keyword id="KW-0997">Cell inner membrane</keyword>
<keyword id="KW-1003">Cell membrane</keyword>
<keyword id="KW-0143">Chaperone</keyword>
<keyword id="KW-0963">Cytoplasm</keyword>
<keyword id="KW-0472">Membrane</keyword>
<keyword id="KW-0614">Plasmid</keyword>
<keyword id="KW-1185">Reference proteome</keyword>
<evidence type="ECO:0000269" key="1">
    <source>
    </source>
</evidence>
<evidence type="ECO:0000269" key="2">
    <source>
    </source>
</evidence>
<evidence type="ECO:0000269" key="3">
    <source>
    </source>
</evidence>
<evidence type="ECO:0000269" key="4">
    <source>
    </source>
</evidence>
<evidence type="ECO:0007829" key="5">
    <source>
        <dbReference type="PDB" id="1XKP"/>
    </source>
</evidence>
<feature type="chain" id="PRO_0000066478" description="Chaperone protein YscB">
    <location>
        <begin position="1"/>
        <end position="137"/>
    </location>
</feature>
<feature type="turn" evidence="5">
    <location>
        <begin position="3"/>
        <end position="5"/>
    </location>
</feature>
<feature type="helix" evidence="5">
    <location>
        <begin position="8"/>
        <end position="11"/>
    </location>
</feature>
<feature type="strand" evidence="5">
    <location>
        <begin position="25"/>
        <end position="29"/>
    </location>
</feature>
<feature type="strand" evidence="5">
    <location>
        <begin position="33"/>
        <end position="39"/>
    </location>
</feature>
<feature type="strand" evidence="5">
    <location>
        <begin position="42"/>
        <end position="48"/>
    </location>
</feature>
<feature type="helix" evidence="5">
    <location>
        <begin position="52"/>
        <end position="54"/>
    </location>
</feature>
<feature type="helix" evidence="5">
    <location>
        <begin position="62"/>
        <end position="75"/>
    </location>
</feature>
<feature type="turn" evidence="5">
    <location>
        <begin position="76"/>
        <end position="78"/>
    </location>
</feature>
<feature type="strand" evidence="5">
    <location>
        <begin position="82"/>
        <end position="85"/>
    </location>
</feature>
<feature type="strand" evidence="5">
    <location>
        <begin position="91"/>
        <end position="98"/>
    </location>
</feature>
<feature type="helix" evidence="5">
    <location>
        <begin position="99"/>
        <end position="101"/>
    </location>
</feature>
<feature type="helix" evidence="5">
    <location>
        <begin position="104"/>
        <end position="112"/>
    </location>
</feature>
<feature type="helix" evidence="5">
    <location>
        <begin position="115"/>
        <end position="121"/>
    </location>
</feature>
<feature type="helix" evidence="5">
    <location>
        <begin position="122"/>
        <end position="125"/>
    </location>
</feature>
<sequence length="137" mass="15409">MQNLLKNLAASLGRKPFVADKQGVYRLTIDKHLVMLAPHGSELVLRTPIDAPMLREGNNVNVTLLRSLMQQALAWAKRYPQTLVLDDCGQLVLEARLRLQELDTHGLQEVINKQLALLEHLIPQLTPFSVASRVGWN</sequence>
<comment type="function">
    <text evidence="1 2 4">Functions as a specific chaperone for YopN. It could facilitate the secretion and the subsequent translocation of YopN.</text>
</comment>
<comment type="subunit">
    <text evidence="1">Interacts with SycN to form a complex which specifically binds to YopN.</text>
</comment>
<comment type="interaction">
    <interactant intactId="EBI-20592268">
        <id>Q56973</id>
    </interactant>
    <interactant intactId="EBI-748420">
        <id>Q9NSC5</id>
        <label>HOMER3</label>
    </interactant>
    <organismsDiffer>true</organismsDiffer>
    <experiments>2</experiments>
</comment>
<comment type="interaction">
    <interactant intactId="EBI-20592268">
        <id>Q56973</id>
    </interactant>
    <interactant intactId="EBI-740019">
        <id>O15162</id>
        <label>PLSCR1</label>
    </interactant>
    <organismsDiffer>true</organismsDiffer>
    <experiments>2</experiments>
</comment>
<comment type="subcellular location">
    <subcellularLocation>
        <location evidence="4">Cytoplasm</location>
    </subcellularLocation>
    <subcellularLocation>
        <location evidence="4">Cell inner membrane</location>
        <topology evidence="4">Peripheral membrane protein</topology>
    </subcellularLocation>
    <text>Not exported across the inner membrane.</text>
</comment>
<comment type="induction">
    <text evidence="3">Transcription is induced at 37 degrees Celsius but down-regulated at this temperature by calcium.</text>
</comment>
<geneLocation type="plasmid">
    <name>pCD1</name>
</geneLocation>
<accession>Q56973</accession>
<proteinExistence type="evidence at protein level"/>
<gene>
    <name type="primary">yscB</name>
    <name type="ordered locus">YPCD1.51</name>
    <name type="ordered locus">y5027</name>
    <name type="ordered locus">y0030</name>
    <name type="ordered locus">YP_pCD32</name>
</gene>
<name>YSCB_YERPE</name>